<organism>
    <name type="scientific">Locusta migratoria</name>
    <name type="common">Migratory locust</name>
    <dbReference type="NCBI Taxonomy" id="7004"/>
    <lineage>
        <taxon>Eukaryota</taxon>
        <taxon>Metazoa</taxon>
        <taxon>Ecdysozoa</taxon>
        <taxon>Arthropoda</taxon>
        <taxon>Hexapoda</taxon>
        <taxon>Insecta</taxon>
        <taxon>Pterygota</taxon>
        <taxon>Neoptera</taxon>
        <taxon>Polyneoptera</taxon>
        <taxon>Orthoptera</taxon>
        <taxon>Caelifera</taxon>
        <taxon>Acrididea</taxon>
        <taxon>Acridomorpha</taxon>
        <taxon>Acridoidea</taxon>
        <taxon>Acrididae</taxon>
        <taxon>Oedipodinae</taxon>
        <taxon>Locusta</taxon>
    </lineage>
</organism>
<name>OAR2_LOCMI</name>
<accession>Q25322</accession>
<feature type="chain" id="PRO_0000069955" description="Putative tyramine receptor 2">
    <location>
        <begin position="1"/>
        <end position="484"/>
    </location>
</feature>
<feature type="topological domain" description="Extracellular" evidence="2">
    <location>
        <begin position="1"/>
        <end position="54"/>
    </location>
</feature>
<feature type="transmembrane region" description="Helical; Name=1" evidence="2">
    <location>
        <begin position="55"/>
        <end position="77"/>
    </location>
</feature>
<feature type="topological domain" description="Cytoplasmic" evidence="2">
    <location>
        <begin position="78"/>
        <end position="87"/>
    </location>
</feature>
<feature type="transmembrane region" description="Helical; Name=2" evidence="2">
    <location>
        <begin position="88"/>
        <end position="109"/>
    </location>
</feature>
<feature type="topological domain" description="Extracellular" evidence="2">
    <location>
        <begin position="110"/>
        <end position="126"/>
    </location>
</feature>
<feature type="transmembrane region" description="Helical; Name=3" evidence="2">
    <location>
        <begin position="127"/>
        <end position="147"/>
    </location>
</feature>
<feature type="topological domain" description="Cytoplasmic" evidence="2">
    <location>
        <begin position="148"/>
        <end position="167"/>
    </location>
</feature>
<feature type="transmembrane region" description="Helical; Name=4" evidence="2">
    <location>
        <begin position="168"/>
        <end position="190"/>
    </location>
</feature>
<feature type="topological domain" description="Extracellular" evidence="2">
    <location>
        <begin position="191"/>
        <end position="215"/>
    </location>
</feature>
<feature type="transmembrane region" description="Helical; Name=5" evidence="2">
    <location>
        <begin position="216"/>
        <end position="237"/>
    </location>
</feature>
<feature type="topological domain" description="Cytoplasmic" evidence="2">
    <location>
        <begin position="238"/>
        <end position="411"/>
    </location>
</feature>
<feature type="transmembrane region" description="Helical; Name=6" evidence="2">
    <location>
        <begin position="412"/>
        <end position="433"/>
    </location>
</feature>
<feature type="topological domain" description="Extracellular" evidence="2">
    <location>
        <begin position="434"/>
        <end position="448"/>
    </location>
</feature>
<feature type="transmembrane region" description="Helical; Name=7" evidence="2">
    <location>
        <begin position="449"/>
        <end position="470"/>
    </location>
</feature>
<feature type="topological domain" description="Cytoplasmic" evidence="2">
    <location>
        <begin position="471"/>
        <end position="484"/>
    </location>
</feature>
<feature type="region of interest" description="Disordered" evidence="4">
    <location>
        <begin position="253"/>
        <end position="322"/>
    </location>
</feature>
<feature type="region of interest" description="Disordered" evidence="4">
    <location>
        <begin position="350"/>
        <end position="383"/>
    </location>
</feature>
<feature type="compositionally biased region" description="Polar residues" evidence="4">
    <location>
        <begin position="253"/>
        <end position="280"/>
    </location>
</feature>
<feature type="compositionally biased region" description="Basic residues" evidence="4">
    <location>
        <begin position="295"/>
        <end position="306"/>
    </location>
</feature>
<feature type="compositionally biased region" description="Low complexity" evidence="4">
    <location>
        <begin position="350"/>
        <end position="360"/>
    </location>
</feature>
<feature type="compositionally biased region" description="Polar residues" evidence="4">
    <location>
        <begin position="361"/>
        <end position="378"/>
    </location>
</feature>
<feature type="glycosylation site" description="N-linked (GlcNAc...) asparagine" evidence="2">
    <location>
        <position position="13"/>
    </location>
</feature>
<feature type="glycosylation site" description="N-linked (GlcNAc...) asparagine" evidence="2">
    <location>
        <position position="198"/>
    </location>
</feature>
<feature type="disulfide bond" evidence="3">
    <location>
        <begin position="124"/>
        <end position="203"/>
    </location>
</feature>
<reference key="1">
    <citation type="submission" date="1992-11" db="EMBL/GenBank/DDBJ databases">
        <authorList>
            <person name="Vanden Broeck J.J.M."/>
        </authorList>
    </citation>
    <scope>NUCLEOTIDE SEQUENCE [MRNA]</scope>
    <source>
        <tissue>Neuron</tissue>
    </source>
</reference>
<gene>
    <name type="primary">GCR2</name>
</gene>
<keyword id="KW-1003">Cell membrane</keyword>
<keyword id="KW-1015">Disulfide bond</keyword>
<keyword id="KW-0297">G-protein coupled receptor</keyword>
<keyword id="KW-0325">Glycoprotein</keyword>
<keyword id="KW-0472">Membrane</keyword>
<keyword id="KW-0675">Receptor</keyword>
<keyword id="KW-0807">Transducer</keyword>
<keyword id="KW-0812">Transmembrane</keyword>
<keyword id="KW-1133">Transmembrane helix</keyword>
<comment type="function">
    <text evidence="1">G-protein coupled receptor for tyramine, a known neurotransmitter and neuromodulator and direct precursor of octopamine.</text>
</comment>
<comment type="subcellular location">
    <subcellularLocation>
        <location>Cell membrane</location>
        <topology>Multi-pass membrane protein</topology>
    </subcellularLocation>
</comment>
<comment type="similarity">
    <text evidence="3">Belongs to the G-protein coupled receptor 1 family.</text>
</comment>
<sequence>MVRVELQAASLMNGSSAAEEPQDALVGGDACGGRRPPSVLGVRLAVPEWEVAVTAVSLSLIILITIVGNVLVVLSVFTYKPLRIVQNFFIVSLAVADLTVAVLVMPFNVAYSLIQRWVFGIVVCKMWLTCDVLCCTASILNLCAIALDRYWAITDPINYAQKRTLRRVLAMIAGVWLLSGVISSPPLIGWNDWPMEFNDTTPCQLTEEQGYVIYSSLGSFFIPLFIMTIVYVEIFIATKRRLRERAKASKLNSAMKQQMAAQAVPSSVPSHDQESVSSETNHNELPPPPAPPSKEKRRKTKKKSKKKDQAAEEGRFLAPAMVAEDSVTDNSVSVGPVAKNHLAEDGYTCTTTTTTTTTTTAVTDSPRSRTASQKGSTAPPTPVQPKSIPVYQFIEEKQRISLSKERRAARTLGIIMGVFVVCWLPFFLMYVIVPFCNPSCKPSPKLVNFITWLGYINSALNPIIYTIFNLDFRRAFKKLLHFKT</sequence>
<evidence type="ECO:0000250" key="1"/>
<evidence type="ECO:0000255" key="2"/>
<evidence type="ECO:0000255" key="3">
    <source>
        <dbReference type="PROSITE-ProRule" id="PRU00521"/>
    </source>
</evidence>
<evidence type="ECO:0000256" key="4">
    <source>
        <dbReference type="SAM" id="MobiDB-lite"/>
    </source>
</evidence>
<protein>
    <recommendedName>
        <fullName>Putative tyramine receptor 2</fullName>
    </recommendedName>
    <alternativeName>
        <fullName>Tyr-Loc2</fullName>
    </alternativeName>
</protein>
<dbReference type="EMBL" id="X69521">
    <property type="protein sequence ID" value="CAA49269.1"/>
    <property type="molecule type" value="mRNA"/>
</dbReference>
<dbReference type="SMR" id="Q25322"/>
<dbReference type="GlyCosmos" id="Q25322">
    <property type="glycosylation" value="2 sites, No reported glycans"/>
</dbReference>
<dbReference type="GO" id="GO:0005886">
    <property type="term" value="C:plasma membrane"/>
    <property type="evidence" value="ECO:0007669"/>
    <property type="project" value="UniProtKB-SubCell"/>
</dbReference>
<dbReference type="GO" id="GO:0004989">
    <property type="term" value="F:octopamine receptor activity"/>
    <property type="evidence" value="ECO:0007669"/>
    <property type="project" value="InterPro"/>
</dbReference>
<dbReference type="CDD" id="cd15060">
    <property type="entry name" value="7tmA_tyramine_octopamine_R-like"/>
    <property type="match status" value="1"/>
</dbReference>
<dbReference type="FunFam" id="1.20.1070.10:FF:000248">
    <property type="entry name" value="5-hydroxytryptamine receptor 1A-beta"/>
    <property type="match status" value="1"/>
</dbReference>
<dbReference type="Gene3D" id="1.20.1070.10">
    <property type="entry name" value="Rhodopsin 7-helix transmembrane proteins"/>
    <property type="match status" value="2"/>
</dbReference>
<dbReference type="InterPro" id="IPR000276">
    <property type="entry name" value="GPCR_Rhodpsn"/>
</dbReference>
<dbReference type="InterPro" id="IPR017452">
    <property type="entry name" value="GPCR_Rhodpsn_7TM"/>
</dbReference>
<dbReference type="InterPro" id="IPR002002">
    <property type="entry name" value="Octopmn_rcpt"/>
</dbReference>
<dbReference type="PANTHER" id="PTHR24248">
    <property type="entry name" value="ADRENERGIC RECEPTOR-RELATED G-PROTEIN COUPLED RECEPTOR"/>
    <property type="match status" value="1"/>
</dbReference>
<dbReference type="PANTHER" id="PTHR24248:SF174">
    <property type="entry name" value="TYRAMINE_OCTOPAMINE RECEPTOR"/>
    <property type="match status" value="1"/>
</dbReference>
<dbReference type="Pfam" id="PF00001">
    <property type="entry name" value="7tm_1"/>
    <property type="match status" value="1"/>
</dbReference>
<dbReference type="PRINTS" id="PR00237">
    <property type="entry name" value="GPCRRHODOPSN"/>
</dbReference>
<dbReference type="PRINTS" id="PR00664">
    <property type="entry name" value="OCTOPAMINER"/>
</dbReference>
<dbReference type="SMART" id="SM01381">
    <property type="entry name" value="7TM_GPCR_Srsx"/>
    <property type="match status" value="1"/>
</dbReference>
<dbReference type="SUPFAM" id="SSF81321">
    <property type="entry name" value="Family A G protein-coupled receptor-like"/>
    <property type="match status" value="1"/>
</dbReference>
<dbReference type="PROSITE" id="PS00237">
    <property type="entry name" value="G_PROTEIN_RECEP_F1_1"/>
    <property type="match status" value="1"/>
</dbReference>
<dbReference type="PROSITE" id="PS50262">
    <property type="entry name" value="G_PROTEIN_RECEP_F1_2"/>
    <property type="match status" value="1"/>
</dbReference>
<proteinExistence type="evidence at transcript level"/>